<proteinExistence type="inferred from homology"/>
<comment type="function">
    <text evidence="1">Binds to the 23S rRNA.</text>
</comment>
<comment type="subunit">
    <text evidence="1">Part of the 50S ribosomal subunit.</text>
</comment>
<comment type="similarity">
    <text evidence="1">Belongs to the universal ribosomal protein uL15 family.</text>
</comment>
<dbReference type="EMBL" id="CP000730">
    <property type="protein sequence ID" value="ABX30215.1"/>
    <property type="molecule type" value="Genomic_DNA"/>
</dbReference>
<dbReference type="RefSeq" id="WP_000766074.1">
    <property type="nucleotide sequence ID" value="NC_010079.1"/>
</dbReference>
<dbReference type="SMR" id="A8Z338"/>
<dbReference type="GeneID" id="98346543"/>
<dbReference type="KEGG" id="sax:USA300HOU_2222"/>
<dbReference type="HOGENOM" id="CLU_055188_4_2_9"/>
<dbReference type="GO" id="GO:0022625">
    <property type="term" value="C:cytosolic large ribosomal subunit"/>
    <property type="evidence" value="ECO:0007669"/>
    <property type="project" value="TreeGrafter"/>
</dbReference>
<dbReference type="GO" id="GO:0019843">
    <property type="term" value="F:rRNA binding"/>
    <property type="evidence" value="ECO:0007669"/>
    <property type="project" value="UniProtKB-UniRule"/>
</dbReference>
<dbReference type="GO" id="GO:0003735">
    <property type="term" value="F:structural constituent of ribosome"/>
    <property type="evidence" value="ECO:0007669"/>
    <property type="project" value="InterPro"/>
</dbReference>
<dbReference type="GO" id="GO:0006412">
    <property type="term" value="P:translation"/>
    <property type="evidence" value="ECO:0007669"/>
    <property type="project" value="UniProtKB-UniRule"/>
</dbReference>
<dbReference type="FunFam" id="3.100.10.10:FF:000004">
    <property type="entry name" value="50S ribosomal protein L15"/>
    <property type="match status" value="1"/>
</dbReference>
<dbReference type="Gene3D" id="3.100.10.10">
    <property type="match status" value="1"/>
</dbReference>
<dbReference type="HAMAP" id="MF_01341">
    <property type="entry name" value="Ribosomal_uL15"/>
    <property type="match status" value="1"/>
</dbReference>
<dbReference type="InterPro" id="IPR030878">
    <property type="entry name" value="Ribosomal_uL15"/>
</dbReference>
<dbReference type="InterPro" id="IPR021131">
    <property type="entry name" value="Ribosomal_uL15/eL18"/>
</dbReference>
<dbReference type="InterPro" id="IPR036227">
    <property type="entry name" value="Ribosomal_uL15/eL18_sf"/>
</dbReference>
<dbReference type="InterPro" id="IPR005749">
    <property type="entry name" value="Ribosomal_uL15_bac-type"/>
</dbReference>
<dbReference type="InterPro" id="IPR001196">
    <property type="entry name" value="Ribosomal_uL15_CS"/>
</dbReference>
<dbReference type="NCBIfam" id="TIGR01071">
    <property type="entry name" value="rplO_bact"/>
    <property type="match status" value="1"/>
</dbReference>
<dbReference type="PANTHER" id="PTHR12934">
    <property type="entry name" value="50S RIBOSOMAL PROTEIN L15"/>
    <property type="match status" value="1"/>
</dbReference>
<dbReference type="PANTHER" id="PTHR12934:SF11">
    <property type="entry name" value="LARGE RIBOSOMAL SUBUNIT PROTEIN UL15M"/>
    <property type="match status" value="1"/>
</dbReference>
<dbReference type="Pfam" id="PF00828">
    <property type="entry name" value="Ribosomal_L27A"/>
    <property type="match status" value="1"/>
</dbReference>
<dbReference type="SUPFAM" id="SSF52080">
    <property type="entry name" value="Ribosomal proteins L15p and L18e"/>
    <property type="match status" value="1"/>
</dbReference>
<dbReference type="PROSITE" id="PS00475">
    <property type="entry name" value="RIBOSOMAL_L15"/>
    <property type="match status" value="1"/>
</dbReference>
<organism>
    <name type="scientific">Staphylococcus aureus (strain USA300 / TCH1516)</name>
    <dbReference type="NCBI Taxonomy" id="451516"/>
    <lineage>
        <taxon>Bacteria</taxon>
        <taxon>Bacillati</taxon>
        <taxon>Bacillota</taxon>
        <taxon>Bacilli</taxon>
        <taxon>Bacillales</taxon>
        <taxon>Staphylococcaceae</taxon>
        <taxon>Staphylococcus</taxon>
    </lineage>
</organism>
<keyword id="KW-0687">Ribonucleoprotein</keyword>
<keyword id="KW-0689">Ribosomal protein</keyword>
<keyword id="KW-0694">RNA-binding</keyword>
<keyword id="KW-0699">rRNA-binding</keyword>
<reference key="1">
    <citation type="journal article" date="2007" name="BMC Microbiol.">
        <title>Subtle genetic changes enhance virulence of methicillin resistant and sensitive Staphylococcus aureus.</title>
        <authorList>
            <person name="Highlander S.K."/>
            <person name="Hulten K.G."/>
            <person name="Qin X."/>
            <person name="Jiang H."/>
            <person name="Yerrapragada S."/>
            <person name="Mason E.O. Jr."/>
            <person name="Shang Y."/>
            <person name="Williams T.M."/>
            <person name="Fortunov R.M."/>
            <person name="Liu Y."/>
            <person name="Igboeli O."/>
            <person name="Petrosino J."/>
            <person name="Tirumalai M."/>
            <person name="Uzman A."/>
            <person name="Fox G.E."/>
            <person name="Cardenas A.M."/>
            <person name="Muzny D.M."/>
            <person name="Hemphill L."/>
            <person name="Ding Y."/>
            <person name="Dugan S."/>
            <person name="Blyth P.R."/>
            <person name="Buhay C.J."/>
            <person name="Dinh H.H."/>
            <person name="Hawes A.C."/>
            <person name="Holder M."/>
            <person name="Kovar C.L."/>
            <person name="Lee S.L."/>
            <person name="Liu W."/>
            <person name="Nazareth L.V."/>
            <person name="Wang Q."/>
            <person name="Zhou J."/>
            <person name="Kaplan S.L."/>
            <person name="Weinstock G.M."/>
        </authorList>
    </citation>
    <scope>NUCLEOTIDE SEQUENCE [LARGE SCALE GENOMIC DNA]</scope>
    <source>
        <strain>USA300 / TCH1516</strain>
    </source>
</reference>
<accession>A8Z338</accession>
<sequence length="146" mass="15597">MKLHELKPAEGSRKERNRVGRGVATGNGKTSGRGHKGQKARSGGGVRPGFEGGQLPLFRRLPKRGFTNINRKEYAIVNLDQLNKFEDGTEVTPALLVESGVVKNEKSGIKILGNGSLDKKLTVKAHKFSASAAEAIDAKGGAHEVI</sequence>
<gene>
    <name evidence="1" type="primary">rplO</name>
    <name type="ordered locus">USA300HOU_2222</name>
</gene>
<feature type="chain" id="PRO_1000086736" description="Large ribosomal subunit protein uL15">
    <location>
        <begin position="1"/>
        <end position="146"/>
    </location>
</feature>
<feature type="region of interest" description="Disordered" evidence="2">
    <location>
        <begin position="1"/>
        <end position="54"/>
    </location>
</feature>
<feature type="compositionally biased region" description="Basic and acidic residues" evidence="2">
    <location>
        <begin position="1"/>
        <end position="18"/>
    </location>
</feature>
<feature type="compositionally biased region" description="Gly residues" evidence="2">
    <location>
        <begin position="42"/>
        <end position="52"/>
    </location>
</feature>
<evidence type="ECO:0000255" key="1">
    <source>
        <dbReference type="HAMAP-Rule" id="MF_01341"/>
    </source>
</evidence>
<evidence type="ECO:0000256" key="2">
    <source>
        <dbReference type="SAM" id="MobiDB-lite"/>
    </source>
</evidence>
<evidence type="ECO:0000305" key="3"/>
<name>RL15_STAAT</name>
<protein>
    <recommendedName>
        <fullName evidence="1">Large ribosomal subunit protein uL15</fullName>
    </recommendedName>
    <alternativeName>
        <fullName evidence="3">50S ribosomal protein L15</fullName>
    </alternativeName>
</protein>